<organism>
    <name type="scientific">Kluyveromyces lactis (strain ATCC 8585 / CBS 2359 / DSM 70799 / NBRC 1267 / NRRL Y-1140 / WM37)</name>
    <name type="common">Yeast</name>
    <name type="synonym">Candida sphaerica</name>
    <dbReference type="NCBI Taxonomy" id="284590"/>
    <lineage>
        <taxon>Eukaryota</taxon>
        <taxon>Fungi</taxon>
        <taxon>Dikarya</taxon>
        <taxon>Ascomycota</taxon>
        <taxon>Saccharomycotina</taxon>
        <taxon>Saccharomycetes</taxon>
        <taxon>Saccharomycetales</taxon>
        <taxon>Saccharomycetaceae</taxon>
        <taxon>Kluyveromyces</taxon>
    </lineage>
</organism>
<comment type="function">
    <text evidence="1">Transcription factor involved in RNA polymerase II transcription regulation. May function in both SPT15/TBP post-recruitment and recruitment steps of transcription (By similarity).</text>
</comment>
<comment type="subcellular location">
    <subcellularLocation>
        <location evidence="2">Nucleus</location>
    </subcellularLocation>
</comment>
<comment type="similarity">
    <text evidence="4">Belongs to the IWS1 family.</text>
</comment>
<protein>
    <recommendedName>
        <fullName>Transcription factor IWS1</fullName>
    </recommendedName>
</protein>
<accession>Q6CVL1</accession>
<gene>
    <name type="primary">IWS1</name>
    <name type="ordered locus">KLLA0B11209g</name>
</gene>
<feature type="chain" id="PRO_0000083361" description="Transcription factor IWS1">
    <location>
        <begin position="1"/>
        <end position="362"/>
    </location>
</feature>
<feature type="domain" description="TFIIS N-terminal" evidence="2">
    <location>
        <begin position="173"/>
        <end position="250"/>
    </location>
</feature>
<feature type="region of interest" description="Disordered" evidence="3">
    <location>
        <begin position="1"/>
        <end position="105"/>
    </location>
</feature>
<feature type="region of interest" description="Disordered" evidence="3">
    <location>
        <begin position="277"/>
        <end position="297"/>
    </location>
</feature>
<feature type="compositionally biased region" description="Basic and acidic residues" evidence="3">
    <location>
        <begin position="1"/>
        <end position="16"/>
    </location>
</feature>
<feature type="compositionally biased region" description="Basic and acidic residues" evidence="3">
    <location>
        <begin position="28"/>
        <end position="38"/>
    </location>
</feature>
<feature type="compositionally biased region" description="Basic and acidic residues" evidence="3">
    <location>
        <begin position="70"/>
        <end position="89"/>
    </location>
</feature>
<feature type="compositionally biased region" description="Basic and acidic residues" evidence="3">
    <location>
        <begin position="287"/>
        <end position="297"/>
    </location>
</feature>
<proteinExistence type="inferred from homology"/>
<dbReference type="EMBL" id="CR382122">
    <property type="protein sequence ID" value="CAH02421.1"/>
    <property type="molecule type" value="Genomic_DNA"/>
</dbReference>
<dbReference type="RefSeq" id="XP_452028.1">
    <property type="nucleotide sequence ID" value="XM_452028.1"/>
</dbReference>
<dbReference type="SMR" id="Q6CVL1"/>
<dbReference type="FunCoup" id="Q6CVL1">
    <property type="interactions" value="395"/>
</dbReference>
<dbReference type="STRING" id="284590.Q6CVL1"/>
<dbReference type="PaxDb" id="284590-Q6CVL1"/>
<dbReference type="KEGG" id="kla:KLLA0_B11209g"/>
<dbReference type="eggNOG" id="KOG1793">
    <property type="taxonomic scope" value="Eukaryota"/>
</dbReference>
<dbReference type="HOGENOM" id="CLU_045275_0_0_1"/>
<dbReference type="InParanoid" id="Q6CVL1"/>
<dbReference type="OMA" id="TDYKFAP"/>
<dbReference type="Proteomes" id="UP000000598">
    <property type="component" value="Chromosome B"/>
</dbReference>
<dbReference type="GO" id="GO:0005634">
    <property type="term" value="C:nucleus"/>
    <property type="evidence" value="ECO:0007669"/>
    <property type="project" value="UniProtKB-SubCell"/>
</dbReference>
<dbReference type="GO" id="GO:0016973">
    <property type="term" value="P:poly(A)+ mRNA export from nucleus"/>
    <property type="evidence" value="ECO:0007669"/>
    <property type="project" value="TreeGrafter"/>
</dbReference>
<dbReference type="Gene3D" id="1.20.5.170">
    <property type="match status" value="1"/>
</dbReference>
<dbReference type="Gene3D" id="1.20.930.10">
    <property type="entry name" value="Conserved domain common to transcription factors TFIIS, elongin A, CRSP70"/>
    <property type="match status" value="1"/>
</dbReference>
<dbReference type="InterPro" id="IPR051037">
    <property type="entry name" value="RNAPII_TF_IWS1"/>
</dbReference>
<dbReference type="InterPro" id="IPR035441">
    <property type="entry name" value="TFIIS/LEDGF_dom_sf"/>
</dbReference>
<dbReference type="InterPro" id="IPR017923">
    <property type="entry name" value="TFIIS_N"/>
</dbReference>
<dbReference type="PANTHER" id="PTHR46010">
    <property type="entry name" value="PROTEIN IWS1 HOMOLOG"/>
    <property type="match status" value="1"/>
</dbReference>
<dbReference type="PANTHER" id="PTHR46010:SF1">
    <property type="entry name" value="PROTEIN IWS1 HOMOLOG"/>
    <property type="match status" value="1"/>
</dbReference>
<dbReference type="Pfam" id="PF08711">
    <property type="entry name" value="Med26"/>
    <property type="match status" value="1"/>
</dbReference>
<dbReference type="SUPFAM" id="SSF47676">
    <property type="entry name" value="Conserved domain common to transcription factors TFIIS, elongin A, CRSP70"/>
    <property type="match status" value="1"/>
</dbReference>
<dbReference type="PROSITE" id="PS51319">
    <property type="entry name" value="TFIIS_N"/>
    <property type="match status" value="1"/>
</dbReference>
<evidence type="ECO:0000250" key="1"/>
<evidence type="ECO:0000255" key="2">
    <source>
        <dbReference type="PROSITE-ProRule" id="PRU00649"/>
    </source>
</evidence>
<evidence type="ECO:0000256" key="3">
    <source>
        <dbReference type="SAM" id="MobiDB-lite"/>
    </source>
</evidence>
<evidence type="ECO:0000305" key="4"/>
<sequence length="362" mass="41097">MSDTERSLSADKKSDTELETPALSNVDPQERTRKHIEATAESDSDADLDPALGNGLPAHDDDEETGSRPVLDEATRKRQDLEARMDQILHKPKKKRTRRDEDDLEQMQDERILRLKDEMNIAAQKDIDTLNERLETGDTKLVAMEKVKLLPKVVKVLSKVNLADTILDNNLLQSVRIWLEPLPDGSLPAFEIQKSLFAALDNLPIKTEHLKESGLGRVVIFYSKSKRVEQKLARLADKLVAEWTRPIIGASDNYRDKRVLKLEFDVEKHRKKTILDTAKSKKKRSKRMEVDEEKYKSSYEQAAARRNRAAAPAQTTTDYKYAPISNIDAVNRNAGVGTSVDSSELYKRLNSKLSGNKHKRSK</sequence>
<reference key="1">
    <citation type="journal article" date="2004" name="Nature">
        <title>Genome evolution in yeasts.</title>
        <authorList>
            <person name="Dujon B."/>
            <person name="Sherman D."/>
            <person name="Fischer G."/>
            <person name="Durrens P."/>
            <person name="Casaregola S."/>
            <person name="Lafontaine I."/>
            <person name="de Montigny J."/>
            <person name="Marck C."/>
            <person name="Neuveglise C."/>
            <person name="Talla E."/>
            <person name="Goffard N."/>
            <person name="Frangeul L."/>
            <person name="Aigle M."/>
            <person name="Anthouard V."/>
            <person name="Babour A."/>
            <person name="Barbe V."/>
            <person name="Barnay S."/>
            <person name="Blanchin S."/>
            <person name="Beckerich J.-M."/>
            <person name="Beyne E."/>
            <person name="Bleykasten C."/>
            <person name="Boisrame A."/>
            <person name="Boyer J."/>
            <person name="Cattolico L."/>
            <person name="Confanioleri F."/>
            <person name="de Daruvar A."/>
            <person name="Despons L."/>
            <person name="Fabre E."/>
            <person name="Fairhead C."/>
            <person name="Ferry-Dumazet H."/>
            <person name="Groppi A."/>
            <person name="Hantraye F."/>
            <person name="Hennequin C."/>
            <person name="Jauniaux N."/>
            <person name="Joyet P."/>
            <person name="Kachouri R."/>
            <person name="Kerrest A."/>
            <person name="Koszul R."/>
            <person name="Lemaire M."/>
            <person name="Lesur I."/>
            <person name="Ma L."/>
            <person name="Muller H."/>
            <person name="Nicaud J.-M."/>
            <person name="Nikolski M."/>
            <person name="Oztas S."/>
            <person name="Ozier-Kalogeropoulos O."/>
            <person name="Pellenz S."/>
            <person name="Potier S."/>
            <person name="Richard G.-F."/>
            <person name="Straub M.-L."/>
            <person name="Suleau A."/>
            <person name="Swennen D."/>
            <person name="Tekaia F."/>
            <person name="Wesolowski-Louvel M."/>
            <person name="Westhof E."/>
            <person name="Wirth B."/>
            <person name="Zeniou-Meyer M."/>
            <person name="Zivanovic Y."/>
            <person name="Bolotin-Fukuhara M."/>
            <person name="Thierry A."/>
            <person name="Bouchier C."/>
            <person name="Caudron B."/>
            <person name="Scarpelli C."/>
            <person name="Gaillardin C."/>
            <person name="Weissenbach J."/>
            <person name="Wincker P."/>
            <person name="Souciet J.-L."/>
        </authorList>
    </citation>
    <scope>NUCLEOTIDE SEQUENCE [LARGE SCALE GENOMIC DNA]</scope>
    <source>
        <strain>ATCC 8585 / CBS 2359 / DSM 70799 / NBRC 1267 / NRRL Y-1140 / WM37</strain>
    </source>
</reference>
<name>IWS1_KLULA</name>
<keyword id="KW-0539">Nucleus</keyword>
<keyword id="KW-1185">Reference proteome</keyword>
<keyword id="KW-0804">Transcription</keyword>
<keyword id="KW-0805">Transcription regulation</keyword>